<proteinExistence type="inferred from homology"/>
<gene>
    <name evidence="1" type="primary">msbA</name>
    <name type="ordered locus">SBO_2202</name>
</gene>
<feature type="chain" id="PRO_0000271656" description="ATP-dependent lipid A-core flippase">
    <location>
        <begin position="1"/>
        <end position="582"/>
    </location>
</feature>
<feature type="transmembrane region" description="Helical" evidence="1">
    <location>
        <begin position="16"/>
        <end position="36"/>
    </location>
</feature>
<feature type="transmembrane region" description="Helical" evidence="1">
    <location>
        <begin position="63"/>
        <end position="83"/>
    </location>
</feature>
<feature type="transmembrane region" description="Helical" evidence="1">
    <location>
        <begin position="153"/>
        <end position="173"/>
    </location>
</feature>
<feature type="transmembrane region" description="Helical" evidence="1">
    <location>
        <begin position="253"/>
        <end position="273"/>
    </location>
</feature>
<feature type="transmembrane region" description="Helical" evidence="1">
    <location>
        <begin position="275"/>
        <end position="295"/>
    </location>
</feature>
<feature type="domain" description="ABC transmembrane type-1" evidence="1">
    <location>
        <begin position="28"/>
        <end position="310"/>
    </location>
</feature>
<feature type="domain" description="ABC transporter" evidence="1">
    <location>
        <begin position="342"/>
        <end position="578"/>
    </location>
</feature>
<feature type="binding site" evidence="1">
    <location>
        <begin position="376"/>
        <end position="383"/>
    </location>
    <ligand>
        <name>ATP</name>
        <dbReference type="ChEBI" id="CHEBI:30616"/>
    </ligand>
</feature>
<name>MSBA_SHIBS</name>
<sequence>MHNDKDLSTWQTFRRLWPTIAPFKAGLIVAGVALILNAASDTFMLSLLKPLLDDGFGKTDRSVLVWMPLVVIGLMILRGITSYVSSYCISWVSGKVVMTMRRRLFGHMMGMPVSFFDKQSTGTLLSRITYDSEQVASSSSGALITVVREGASIIGLFIMMFYYSWQLSIILIVLAPIVSIAIRVVSKRFRNISKNMQNTMGQVTTSAEQMLKGHKEVLIFGGQEVETKRFDKVSNRMRLQGMKMVSASSISDPIIQLIASLALAFVLYAASFPSVMDSLTAGTITVVFSSMIALMRPLKSLTNVNAQFQRGMAACQTLFTILDSEQEKDEGKRVIERATGDVEFRNVTFTYPGRDVPALRNINLKIPAGKTVALVGRSGSGKSTIASLITRFYDIDEGEILMDGHDLREYTLASLRNQVALVSQNVHLFNDTVANNIAYARTEQYSREQIEEAARMAYAMDFINKMDNGLDTVIGENGVLLSGGQRQRIAIARALLRDSPILILDEATSALDTESERAIQAALDELQKNRTSLVIAHRLSTIEKADEIVVVEDGVIVERGTHNDLLEHRGVYAQLHKMQFGQ</sequence>
<accession>Q31YT6</accession>
<protein>
    <recommendedName>
        <fullName evidence="1">ATP-dependent lipid A-core flippase</fullName>
        <ecNumber evidence="1">7.5.2.6</ecNumber>
    </recommendedName>
    <alternativeName>
        <fullName evidence="1">Lipid A export ATP-binding/permease protein MsbA</fullName>
    </alternativeName>
</protein>
<organism>
    <name type="scientific">Shigella boydii serotype 4 (strain Sb227)</name>
    <dbReference type="NCBI Taxonomy" id="300268"/>
    <lineage>
        <taxon>Bacteria</taxon>
        <taxon>Pseudomonadati</taxon>
        <taxon>Pseudomonadota</taxon>
        <taxon>Gammaproteobacteria</taxon>
        <taxon>Enterobacterales</taxon>
        <taxon>Enterobacteriaceae</taxon>
        <taxon>Shigella</taxon>
    </lineage>
</organism>
<dbReference type="EC" id="7.5.2.6" evidence="1"/>
<dbReference type="EMBL" id="CP000036">
    <property type="protein sequence ID" value="ABB66772.1"/>
    <property type="molecule type" value="Genomic_DNA"/>
</dbReference>
<dbReference type="RefSeq" id="WP_000551270.1">
    <property type="nucleotide sequence ID" value="NC_007613.1"/>
</dbReference>
<dbReference type="SMR" id="Q31YT6"/>
<dbReference type="GeneID" id="75205316"/>
<dbReference type="KEGG" id="sbo:SBO_2202"/>
<dbReference type="HOGENOM" id="CLU_000604_84_3_6"/>
<dbReference type="Proteomes" id="UP000007067">
    <property type="component" value="Chromosome"/>
</dbReference>
<dbReference type="GO" id="GO:0005886">
    <property type="term" value="C:plasma membrane"/>
    <property type="evidence" value="ECO:0007669"/>
    <property type="project" value="UniProtKB-SubCell"/>
</dbReference>
<dbReference type="GO" id="GO:0015421">
    <property type="term" value="F:ABC-type oligopeptide transporter activity"/>
    <property type="evidence" value="ECO:0007669"/>
    <property type="project" value="TreeGrafter"/>
</dbReference>
<dbReference type="GO" id="GO:0005524">
    <property type="term" value="F:ATP binding"/>
    <property type="evidence" value="ECO:0007669"/>
    <property type="project" value="UniProtKB-KW"/>
</dbReference>
<dbReference type="GO" id="GO:0016887">
    <property type="term" value="F:ATP hydrolysis activity"/>
    <property type="evidence" value="ECO:0007669"/>
    <property type="project" value="InterPro"/>
</dbReference>
<dbReference type="GO" id="GO:0034040">
    <property type="term" value="F:ATPase-coupled lipid transmembrane transporter activity"/>
    <property type="evidence" value="ECO:0007669"/>
    <property type="project" value="InterPro"/>
</dbReference>
<dbReference type="CDD" id="cd18552">
    <property type="entry name" value="ABC_6TM_MsbA_like"/>
    <property type="match status" value="1"/>
</dbReference>
<dbReference type="CDD" id="cd03251">
    <property type="entry name" value="ABCC_MsbA"/>
    <property type="match status" value="1"/>
</dbReference>
<dbReference type="FunFam" id="1.20.1560.10:FF:000008">
    <property type="entry name" value="Lipid A export ATP-binding/permease protein MsbA"/>
    <property type="match status" value="1"/>
</dbReference>
<dbReference type="FunFam" id="3.40.50.300:FF:000140">
    <property type="entry name" value="Lipid A export ATP-binding/permease protein MsbA"/>
    <property type="match status" value="1"/>
</dbReference>
<dbReference type="Gene3D" id="1.20.1560.10">
    <property type="entry name" value="ABC transporter type 1, transmembrane domain"/>
    <property type="match status" value="1"/>
</dbReference>
<dbReference type="Gene3D" id="3.40.50.300">
    <property type="entry name" value="P-loop containing nucleotide triphosphate hydrolases"/>
    <property type="match status" value="1"/>
</dbReference>
<dbReference type="InterPro" id="IPR003593">
    <property type="entry name" value="AAA+_ATPase"/>
</dbReference>
<dbReference type="InterPro" id="IPR011527">
    <property type="entry name" value="ABC1_TM_dom"/>
</dbReference>
<dbReference type="InterPro" id="IPR036640">
    <property type="entry name" value="ABC1_TM_sf"/>
</dbReference>
<dbReference type="InterPro" id="IPR003439">
    <property type="entry name" value="ABC_transporter-like_ATP-bd"/>
</dbReference>
<dbReference type="InterPro" id="IPR017871">
    <property type="entry name" value="ABC_transporter-like_CS"/>
</dbReference>
<dbReference type="InterPro" id="IPR011917">
    <property type="entry name" value="ABC_transpr_lipidA"/>
</dbReference>
<dbReference type="InterPro" id="IPR027417">
    <property type="entry name" value="P-loop_NTPase"/>
</dbReference>
<dbReference type="InterPro" id="IPR039421">
    <property type="entry name" value="Type_1_exporter"/>
</dbReference>
<dbReference type="NCBIfam" id="TIGR02203">
    <property type="entry name" value="MsbA_lipidA"/>
    <property type="match status" value="1"/>
</dbReference>
<dbReference type="NCBIfam" id="NF008381">
    <property type="entry name" value="PRK11176.1"/>
    <property type="match status" value="1"/>
</dbReference>
<dbReference type="PANTHER" id="PTHR43394:SF1">
    <property type="entry name" value="ATP-BINDING CASSETTE SUB-FAMILY B MEMBER 10, MITOCHONDRIAL"/>
    <property type="match status" value="1"/>
</dbReference>
<dbReference type="PANTHER" id="PTHR43394">
    <property type="entry name" value="ATP-DEPENDENT PERMEASE MDL1, MITOCHONDRIAL"/>
    <property type="match status" value="1"/>
</dbReference>
<dbReference type="Pfam" id="PF00664">
    <property type="entry name" value="ABC_membrane"/>
    <property type="match status" value="1"/>
</dbReference>
<dbReference type="Pfam" id="PF00005">
    <property type="entry name" value="ABC_tran"/>
    <property type="match status" value="1"/>
</dbReference>
<dbReference type="SMART" id="SM00382">
    <property type="entry name" value="AAA"/>
    <property type="match status" value="1"/>
</dbReference>
<dbReference type="SUPFAM" id="SSF90123">
    <property type="entry name" value="ABC transporter transmembrane region"/>
    <property type="match status" value="1"/>
</dbReference>
<dbReference type="SUPFAM" id="SSF52540">
    <property type="entry name" value="P-loop containing nucleoside triphosphate hydrolases"/>
    <property type="match status" value="1"/>
</dbReference>
<dbReference type="PROSITE" id="PS50929">
    <property type="entry name" value="ABC_TM1F"/>
    <property type="match status" value="1"/>
</dbReference>
<dbReference type="PROSITE" id="PS00211">
    <property type="entry name" value="ABC_TRANSPORTER_1"/>
    <property type="match status" value="1"/>
</dbReference>
<dbReference type="PROSITE" id="PS50893">
    <property type="entry name" value="ABC_TRANSPORTER_2"/>
    <property type="match status" value="1"/>
</dbReference>
<dbReference type="PROSITE" id="PS51239">
    <property type="entry name" value="MSBA"/>
    <property type="match status" value="1"/>
</dbReference>
<evidence type="ECO:0000255" key="1">
    <source>
        <dbReference type="HAMAP-Rule" id="MF_01703"/>
    </source>
</evidence>
<reference key="1">
    <citation type="journal article" date="2005" name="Nucleic Acids Res.">
        <title>Genome dynamics and diversity of Shigella species, the etiologic agents of bacillary dysentery.</title>
        <authorList>
            <person name="Yang F."/>
            <person name="Yang J."/>
            <person name="Zhang X."/>
            <person name="Chen L."/>
            <person name="Jiang Y."/>
            <person name="Yan Y."/>
            <person name="Tang X."/>
            <person name="Wang J."/>
            <person name="Xiong Z."/>
            <person name="Dong J."/>
            <person name="Xue Y."/>
            <person name="Zhu Y."/>
            <person name="Xu X."/>
            <person name="Sun L."/>
            <person name="Chen S."/>
            <person name="Nie H."/>
            <person name="Peng J."/>
            <person name="Xu J."/>
            <person name="Wang Y."/>
            <person name="Yuan Z."/>
            <person name="Wen Y."/>
            <person name="Yao Z."/>
            <person name="Shen Y."/>
            <person name="Qiang B."/>
            <person name="Hou Y."/>
            <person name="Yu J."/>
            <person name="Jin Q."/>
        </authorList>
    </citation>
    <scope>NUCLEOTIDE SEQUENCE [LARGE SCALE GENOMIC DNA]</scope>
    <source>
        <strain>Sb227</strain>
    </source>
</reference>
<keyword id="KW-0067">ATP-binding</keyword>
<keyword id="KW-0997">Cell inner membrane</keyword>
<keyword id="KW-1003">Cell membrane</keyword>
<keyword id="KW-0445">Lipid transport</keyword>
<keyword id="KW-0472">Membrane</keyword>
<keyword id="KW-0547">Nucleotide-binding</keyword>
<keyword id="KW-1278">Translocase</keyword>
<keyword id="KW-0812">Transmembrane</keyword>
<keyword id="KW-1133">Transmembrane helix</keyword>
<keyword id="KW-0813">Transport</keyword>
<comment type="function">
    <text evidence="1">Involved in lipopolysaccharide (LPS) biosynthesis. Translocates lipid A-core from the inner to the outer leaflet of the inner membrane. Transmembrane domains (TMD) form a pore in the inner membrane and the ATP-binding domain (NBD) is responsible for energy generation.</text>
</comment>
<comment type="catalytic activity">
    <reaction evidence="1">
        <text>ATP + H2O + lipid A-core oligosaccharideSide 1 = ADP + phosphate + lipid A-core oligosaccharideSide 2.</text>
        <dbReference type="EC" id="7.5.2.6"/>
    </reaction>
</comment>
<comment type="subunit">
    <text evidence="1">Homodimer.</text>
</comment>
<comment type="subcellular location">
    <subcellularLocation>
        <location evidence="1">Cell inner membrane</location>
        <topology evidence="1">Multi-pass membrane protein</topology>
    </subcellularLocation>
</comment>
<comment type="domain">
    <text evidence="1">In MsbA the ATP-binding domain (NBD) and the transmembrane domain (TMD) are fused.</text>
</comment>
<comment type="similarity">
    <text evidence="1">Belongs to the ABC transporter superfamily. Lipid exporter (TC 3.A.1.106) family.</text>
</comment>